<proteinExistence type="inferred from homology"/>
<comment type="function">
    <text evidence="1">Catalyzes the hydrolysis of the adenine ring of phosphoribosyl-AMP.</text>
</comment>
<comment type="catalytic activity">
    <reaction evidence="1">
        <text>1-(5-phospho-beta-D-ribosyl)-5'-AMP + H2O = 1-(5-phospho-beta-D-ribosyl)-5-[(5-phospho-beta-D-ribosylamino)methylideneamino]imidazole-4-carboxamide</text>
        <dbReference type="Rhea" id="RHEA:20049"/>
        <dbReference type="ChEBI" id="CHEBI:15377"/>
        <dbReference type="ChEBI" id="CHEBI:58435"/>
        <dbReference type="ChEBI" id="CHEBI:59457"/>
        <dbReference type="EC" id="3.5.4.19"/>
    </reaction>
</comment>
<comment type="cofactor">
    <cofactor evidence="1">
        <name>Mg(2+)</name>
        <dbReference type="ChEBI" id="CHEBI:18420"/>
    </cofactor>
    <text evidence="1">Binds 1 Mg(2+) ion per subunit.</text>
</comment>
<comment type="cofactor">
    <cofactor evidence="1">
        <name>Zn(2+)</name>
        <dbReference type="ChEBI" id="CHEBI:29105"/>
    </cofactor>
    <text evidence="1">Binds 1 zinc ion per subunit.</text>
</comment>
<comment type="pathway">
    <text evidence="1">Amino-acid biosynthesis; L-histidine biosynthesis; L-histidine from 5-phospho-alpha-D-ribose 1-diphosphate: step 3/9.</text>
</comment>
<comment type="subunit">
    <text evidence="1">Homodimer.</text>
</comment>
<comment type="subcellular location">
    <subcellularLocation>
        <location evidence="1">Cytoplasm</location>
    </subcellularLocation>
</comment>
<comment type="similarity">
    <text evidence="1">Belongs to the PRA-CH family.</text>
</comment>
<reference key="1">
    <citation type="journal article" date="1996" name="Microbiology">
        <title>Cloning of the Rhodobacter sphaeroides hisL gene: unifunctionality of the encoded protein and lack of linkage to other his genes.</title>
        <authorList>
            <person name="Oriol E."/>
            <person name="Mendez-Alvarez S."/>
            <person name="Barbe J."/>
            <person name="Gibert I."/>
        </authorList>
    </citation>
    <scope>NUCLEOTIDE SEQUENCE [GENOMIC DNA]</scope>
</reference>
<reference key="2">
    <citation type="submission" date="2005-09" db="EMBL/GenBank/DDBJ databases">
        <title>Complete sequence of chromosome 1 of Rhodobacter sphaeroides 2.4.1.</title>
        <authorList>
            <person name="Copeland A."/>
            <person name="Lucas S."/>
            <person name="Lapidus A."/>
            <person name="Barry K."/>
            <person name="Detter J.C."/>
            <person name="Glavina T."/>
            <person name="Hammon N."/>
            <person name="Israni S."/>
            <person name="Pitluck S."/>
            <person name="Richardson P."/>
            <person name="Mackenzie C."/>
            <person name="Choudhary M."/>
            <person name="Larimer F."/>
            <person name="Hauser L.J."/>
            <person name="Land M."/>
            <person name="Donohue T.J."/>
            <person name="Kaplan S."/>
        </authorList>
    </citation>
    <scope>NUCLEOTIDE SEQUENCE [LARGE SCALE GENOMIC DNA]</scope>
    <source>
        <strain>ATCC 17023 / DSM 158 / JCM 6121 / CCUG 31486 / LMG 2827 / NBRC 12203 / NCIMB 8253 / ATH 2.4.1.</strain>
    </source>
</reference>
<organism>
    <name type="scientific">Cereibacter sphaeroides (strain ATCC 17023 / DSM 158 / JCM 6121 / CCUG 31486 / LMG 2827 / NBRC 12203 / NCIMB 8253 / ATH 2.4.1.)</name>
    <name type="common">Rhodobacter sphaeroides</name>
    <dbReference type="NCBI Taxonomy" id="272943"/>
    <lineage>
        <taxon>Bacteria</taxon>
        <taxon>Pseudomonadati</taxon>
        <taxon>Pseudomonadota</taxon>
        <taxon>Alphaproteobacteria</taxon>
        <taxon>Rhodobacterales</taxon>
        <taxon>Paracoccaceae</taxon>
        <taxon>Cereibacter</taxon>
    </lineage>
</organism>
<protein>
    <recommendedName>
        <fullName evidence="1">Phosphoribosyl-AMP cyclohydrolase</fullName>
        <shortName evidence="1">PRA-CH</shortName>
        <ecNumber evidence="1">3.5.4.19</ecNumber>
    </recommendedName>
</protein>
<dbReference type="EC" id="3.5.4.19" evidence="1"/>
<dbReference type="EMBL" id="X82010">
    <property type="protein sequence ID" value="CAA57537.1"/>
    <property type="molecule type" value="Genomic_DNA"/>
</dbReference>
<dbReference type="EMBL" id="CP000143">
    <property type="protein sequence ID" value="ABA78783.1"/>
    <property type="molecule type" value="Genomic_DNA"/>
</dbReference>
<dbReference type="PIR" id="S49467">
    <property type="entry name" value="S49467"/>
</dbReference>
<dbReference type="RefSeq" id="WP_011337616.1">
    <property type="nucleotide sequence ID" value="NC_007493.2"/>
</dbReference>
<dbReference type="RefSeq" id="YP_352684.1">
    <property type="nucleotide sequence ID" value="NC_007493.2"/>
</dbReference>
<dbReference type="SMR" id="Q53158"/>
<dbReference type="STRING" id="272943.RSP_2627"/>
<dbReference type="EnsemblBacteria" id="ABA78783">
    <property type="protein sequence ID" value="ABA78783"/>
    <property type="gene ID" value="RSP_2627"/>
</dbReference>
<dbReference type="GeneID" id="3720299"/>
<dbReference type="KEGG" id="rsp:RSP_2627"/>
<dbReference type="PATRIC" id="fig|272943.9.peg.1545"/>
<dbReference type="eggNOG" id="COG0139">
    <property type="taxonomic scope" value="Bacteria"/>
</dbReference>
<dbReference type="OrthoDB" id="9795769at2"/>
<dbReference type="PhylomeDB" id="Q53158"/>
<dbReference type="UniPathway" id="UPA00031">
    <property type="reaction ID" value="UER00008"/>
</dbReference>
<dbReference type="Proteomes" id="UP000002703">
    <property type="component" value="Chromosome 1"/>
</dbReference>
<dbReference type="GO" id="GO:0005737">
    <property type="term" value="C:cytoplasm"/>
    <property type="evidence" value="ECO:0007669"/>
    <property type="project" value="UniProtKB-SubCell"/>
</dbReference>
<dbReference type="GO" id="GO:0000287">
    <property type="term" value="F:magnesium ion binding"/>
    <property type="evidence" value="ECO:0007669"/>
    <property type="project" value="UniProtKB-UniRule"/>
</dbReference>
<dbReference type="GO" id="GO:0004635">
    <property type="term" value="F:phosphoribosyl-AMP cyclohydrolase activity"/>
    <property type="evidence" value="ECO:0007669"/>
    <property type="project" value="UniProtKB-UniRule"/>
</dbReference>
<dbReference type="GO" id="GO:0008270">
    <property type="term" value="F:zinc ion binding"/>
    <property type="evidence" value="ECO:0007669"/>
    <property type="project" value="UniProtKB-UniRule"/>
</dbReference>
<dbReference type="GO" id="GO:0000105">
    <property type="term" value="P:L-histidine biosynthetic process"/>
    <property type="evidence" value="ECO:0007669"/>
    <property type="project" value="UniProtKB-UniRule"/>
</dbReference>
<dbReference type="FunFam" id="3.10.20.810:FF:000001">
    <property type="entry name" value="Histidine biosynthesis bifunctional protein HisIE"/>
    <property type="match status" value="1"/>
</dbReference>
<dbReference type="Gene3D" id="3.10.20.810">
    <property type="entry name" value="Phosphoribosyl-AMP cyclohydrolase"/>
    <property type="match status" value="1"/>
</dbReference>
<dbReference type="HAMAP" id="MF_01021">
    <property type="entry name" value="HisI"/>
    <property type="match status" value="1"/>
</dbReference>
<dbReference type="InterPro" id="IPR026660">
    <property type="entry name" value="PRA-CH"/>
</dbReference>
<dbReference type="InterPro" id="IPR002496">
    <property type="entry name" value="PRib_AMP_CycHydrolase_dom"/>
</dbReference>
<dbReference type="InterPro" id="IPR038019">
    <property type="entry name" value="PRib_AMP_CycHydrolase_sf"/>
</dbReference>
<dbReference type="NCBIfam" id="NF000768">
    <property type="entry name" value="PRK00051.1"/>
    <property type="match status" value="1"/>
</dbReference>
<dbReference type="PANTHER" id="PTHR42945">
    <property type="entry name" value="HISTIDINE BIOSYNTHESIS BIFUNCTIONAL PROTEIN"/>
    <property type="match status" value="1"/>
</dbReference>
<dbReference type="PANTHER" id="PTHR42945:SF1">
    <property type="entry name" value="HISTIDINE BIOSYNTHESIS BIFUNCTIONAL PROTEIN HIS7"/>
    <property type="match status" value="1"/>
</dbReference>
<dbReference type="Pfam" id="PF01502">
    <property type="entry name" value="PRA-CH"/>
    <property type="match status" value="1"/>
</dbReference>
<dbReference type="SUPFAM" id="SSF141734">
    <property type="entry name" value="HisI-like"/>
    <property type="match status" value="1"/>
</dbReference>
<feature type="chain" id="PRO_0000136499" description="Phosphoribosyl-AMP cyclohydrolase">
    <location>
        <begin position="1"/>
        <end position="119"/>
    </location>
</feature>
<feature type="binding site" evidence="1">
    <location>
        <position position="77"/>
    </location>
    <ligand>
        <name>Mg(2+)</name>
        <dbReference type="ChEBI" id="CHEBI:18420"/>
    </ligand>
</feature>
<feature type="binding site" evidence="1">
    <location>
        <position position="78"/>
    </location>
    <ligand>
        <name>Zn(2+)</name>
        <dbReference type="ChEBI" id="CHEBI:29105"/>
        <note>ligand shared between dimeric partners</note>
    </ligand>
</feature>
<feature type="binding site" evidence="1">
    <location>
        <position position="79"/>
    </location>
    <ligand>
        <name>Mg(2+)</name>
        <dbReference type="ChEBI" id="CHEBI:18420"/>
    </ligand>
</feature>
<feature type="binding site" evidence="1">
    <location>
        <position position="81"/>
    </location>
    <ligand>
        <name>Mg(2+)</name>
        <dbReference type="ChEBI" id="CHEBI:18420"/>
    </ligand>
</feature>
<feature type="binding site" evidence="1">
    <location>
        <position position="94"/>
    </location>
    <ligand>
        <name>Zn(2+)</name>
        <dbReference type="ChEBI" id="CHEBI:29105"/>
        <note>ligand shared between dimeric partners</note>
    </ligand>
</feature>
<feature type="binding site" evidence="1">
    <location>
        <position position="101"/>
    </location>
    <ligand>
        <name>Zn(2+)</name>
        <dbReference type="ChEBI" id="CHEBI:29105"/>
        <note>ligand shared between dimeric partners</note>
    </ligand>
</feature>
<sequence>MAFDPASLTFDANGLIPAVAQDHATGEVLMMAWMNAEAVARTVETGCVTYWSRSRQAFWVKGETSGHVQRLIELRIDCDRDCLLLLIEQEGPACHTNRRSCFYTALREGEERIILDPMV</sequence>
<accession>Q53158</accession>
<accession>Q3J351</accession>
<gene>
    <name evidence="1" type="primary">hisI</name>
    <name type="ordered locus">RHOS4_12150</name>
    <name type="ORF">RSP_2627</name>
</gene>
<evidence type="ECO:0000255" key="1">
    <source>
        <dbReference type="HAMAP-Rule" id="MF_01021"/>
    </source>
</evidence>
<keyword id="KW-0028">Amino-acid biosynthesis</keyword>
<keyword id="KW-0963">Cytoplasm</keyword>
<keyword id="KW-0368">Histidine biosynthesis</keyword>
<keyword id="KW-0378">Hydrolase</keyword>
<keyword id="KW-0460">Magnesium</keyword>
<keyword id="KW-0479">Metal-binding</keyword>
<keyword id="KW-1185">Reference proteome</keyword>
<keyword id="KW-0862">Zinc</keyword>
<name>HIS3_CERS4</name>